<accession>Q9C7P1</accession>
<accession>F4I1J5</accession>
<accession>Q9C7P0</accession>
<protein>
    <recommendedName>
        <fullName>Putative zinc finger CCCH domain-containing protein 10</fullName>
        <shortName>AtC3H10</shortName>
    </recommendedName>
</protein>
<gene>
    <name type="ordered locus">At1g29600/At1g29610</name>
    <name type="ORF">F15D2.17/F15D2.18</name>
</gene>
<dbReference type="EMBL" id="AC068667">
    <property type="protein sequence ID" value="AAG51745.1"/>
    <property type="status" value="ALT_SEQ"/>
    <property type="molecule type" value="Genomic_DNA"/>
</dbReference>
<dbReference type="EMBL" id="AC068667">
    <property type="protein sequence ID" value="AAG51747.1"/>
    <property type="status" value="ALT_SEQ"/>
    <property type="molecule type" value="Genomic_DNA"/>
</dbReference>
<dbReference type="EMBL" id="CP002684">
    <property type="status" value="NOT_ANNOTATED_CDS"/>
    <property type="molecule type" value="Genomic_DNA"/>
</dbReference>
<dbReference type="PIR" id="B86419">
    <property type="entry name" value="B86419"/>
</dbReference>
<dbReference type="PIR" id="C86419">
    <property type="entry name" value="C86419"/>
</dbReference>
<dbReference type="STRING" id="3702.Q9C7P1"/>
<dbReference type="PaxDb" id="3702-AT1G29600.1"/>
<dbReference type="Araport" id="AT1G29600"/>
<dbReference type="TAIR" id="AT1G29600"/>
<dbReference type="eggNOG" id="KOG1677">
    <property type="taxonomic scope" value="Eukaryota"/>
</dbReference>
<dbReference type="HOGENOM" id="CLU_059817_0_0_1"/>
<dbReference type="InParanoid" id="Q9C7P1"/>
<dbReference type="PRO" id="PR:Q9C7P1"/>
<dbReference type="Proteomes" id="UP000006548">
    <property type="component" value="Chromosome 1"/>
</dbReference>
<dbReference type="ExpressionAtlas" id="Q9C7P1">
    <property type="expression patterns" value="baseline and differential"/>
</dbReference>
<dbReference type="GO" id="GO:0003677">
    <property type="term" value="F:DNA binding"/>
    <property type="evidence" value="ECO:0007669"/>
    <property type="project" value="UniProtKB-KW"/>
</dbReference>
<dbReference type="GO" id="GO:0003729">
    <property type="term" value="F:mRNA binding"/>
    <property type="evidence" value="ECO:0000318"/>
    <property type="project" value="GO_Central"/>
</dbReference>
<dbReference type="GO" id="GO:0008270">
    <property type="term" value="F:zinc ion binding"/>
    <property type="evidence" value="ECO:0007669"/>
    <property type="project" value="UniProtKB-KW"/>
</dbReference>
<dbReference type="Gene3D" id="4.10.1000.10">
    <property type="entry name" value="Zinc finger, CCCH-type"/>
    <property type="match status" value="1"/>
</dbReference>
<dbReference type="InterPro" id="IPR050974">
    <property type="entry name" value="Plant_ZF_CCCH"/>
</dbReference>
<dbReference type="InterPro" id="IPR000571">
    <property type="entry name" value="Znf_CCCH"/>
</dbReference>
<dbReference type="PANTHER" id="PTHR12506">
    <property type="entry name" value="PROTEIN PHOSPHATASE RELATED"/>
    <property type="match status" value="1"/>
</dbReference>
<dbReference type="PANTHER" id="PTHR12506:SF79">
    <property type="entry name" value="ZINC FINGER C-X8-C-X5-C-X3-H TYPE FAMILY PROTEIN-RELATED"/>
    <property type="match status" value="1"/>
</dbReference>
<dbReference type="PROSITE" id="PS50103">
    <property type="entry name" value="ZF_C3H1"/>
    <property type="match status" value="2"/>
</dbReference>
<keyword id="KW-0238">DNA-binding</keyword>
<keyword id="KW-0479">Metal-binding</keyword>
<keyword id="KW-1185">Reference proteome</keyword>
<keyword id="KW-0677">Repeat</keyword>
<keyword id="KW-0862">Zinc</keyword>
<keyword id="KW-0863">Zinc-finger</keyword>
<reference key="1">
    <citation type="journal article" date="2000" name="Nature">
        <title>Sequence and analysis of chromosome 1 of the plant Arabidopsis thaliana.</title>
        <authorList>
            <person name="Theologis A."/>
            <person name="Ecker J.R."/>
            <person name="Palm C.J."/>
            <person name="Federspiel N.A."/>
            <person name="Kaul S."/>
            <person name="White O."/>
            <person name="Alonso J."/>
            <person name="Altafi H."/>
            <person name="Araujo R."/>
            <person name="Bowman C.L."/>
            <person name="Brooks S.Y."/>
            <person name="Buehler E."/>
            <person name="Chan A."/>
            <person name="Chao Q."/>
            <person name="Chen H."/>
            <person name="Cheuk R.F."/>
            <person name="Chin C.W."/>
            <person name="Chung M.K."/>
            <person name="Conn L."/>
            <person name="Conway A.B."/>
            <person name="Conway A.R."/>
            <person name="Creasy T.H."/>
            <person name="Dewar K."/>
            <person name="Dunn P."/>
            <person name="Etgu P."/>
            <person name="Feldblyum T.V."/>
            <person name="Feng J.-D."/>
            <person name="Fong B."/>
            <person name="Fujii C.Y."/>
            <person name="Gill J.E."/>
            <person name="Goldsmith A.D."/>
            <person name="Haas B."/>
            <person name="Hansen N.F."/>
            <person name="Hughes B."/>
            <person name="Huizar L."/>
            <person name="Hunter J.L."/>
            <person name="Jenkins J."/>
            <person name="Johnson-Hopson C."/>
            <person name="Khan S."/>
            <person name="Khaykin E."/>
            <person name="Kim C.J."/>
            <person name="Koo H.L."/>
            <person name="Kremenetskaia I."/>
            <person name="Kurtz D.B."/>
            <person name="Kwan A."/>
            <person name="Lam B."/>
            <person name="Langin-Hooper S."/>
            <person name="Lee A."/>
            <person name="Lee J.M."/>
            <person name="Lenz C.A."/>
            <person name="Li J.H."/>
            <person name="Li Y.-P."/>
            <person name="Lin X."/>
            <person name="Liu S.X."/>
            <person name="Liu Z.A."/>
            <person name="Luros J.S."/>
            <person name="Maiti R."/>
            <person name="Marziali A."/>
            <person name="Militscher J."/>
            <person name="Miranda M."/>
            <person name="Nguyen M."/>
            <person name="Nierman W.C."/>
            <person name="Osborne B.I."/>
            <person name="Pai G."/>
            <person name="Peterson J."/>
            <person name="Pham P.K."/>
            <person name="Rizzo M."/>
            <person name="Rooney T."/>
            <person name="Rowley D."/>
            <person name="Sakano H."/>
            <person name="Salzberg S.L."/>
            <person name="Schwartz J.R."/>
            <person name="Shinn P."/>
            <person name="Southwick A.M."/>
            <person name="Sun H."/>
            <person name="Tallon L.J."/>
            <person name="Tambunga G."/>
            <person name="Toriumi M.J."/>
            <person name="Town C.D."/>
            <person name="Utterback T."/>
            <person name="Van Aken S."/>
            <person name="Vaysberg M."/>
            <person name="Vysotskaia V.S."/>
            <person name="Walker M."/>
            <person name="Wu D."/>
            <person name="Yu G."/>
            <person name="Fraser C.M."/>
            <person name="Venter J.C."/>
            <person name="Davis R.W."/>
        </authorList>
    </citation>
    <scope>NUCLEOTIDE SEQUENCE [LARGE SCALE GENOMIC DNA]</scope>
    <source>
        <strain>cv. Columbia</strain>
    </source>
</reference>
<reference key="2">
    <citation type="journal article" date="2017" name="Plant J.">
        <title>Araport11: a complete reannotation of the Arabidopsis thaliana reference genome.</title>
        <authorList>
            <person name="Cheng C.Y."/>
            <person name="Krishnakumar V."/>
            <person name="Chan A.P."/>
            <person name="Thibaud-Nissen F."/>
            <person name="Schobel S."/>
            <person name="Town C.D."/>
        </authorList>
    </citation>
    <scope>GENOME REANNOTATION</scope>
    <source>
        <strain>cv. Columbia</strain>
    </source>
</reference>
<reference key="3">
    <citation type="journal article" date="2008" name="BMC Genomics">
        <title>Genome-wide analysis of CCCH zinc finger family in Arabidopsis and rice.</title>
        <authorList>
            <person name="Wang D."/>
            <person name="Guo Y."/>
            <person name="Wu C."/>
            <person name="Yang G."/>
            <person name="Li Y."/>
            <person name="Zheng C."/>
        </authorList>
    </citation>
    <scope>NOMENCLATURE</scope>
</reference>
<organism>
    <name type="scientific">Arabidopsis thaliana</name>
    <name type="common">Mouse-ear cress</name>
    <dbReference type="NCBI Taxonomy" id="3702"/>
    <lineage>
        <taxon>Eukaryota</taxon>
        <taxon>Viridiplantae</taxon>
        <taxon>Streptophyta</taxon>
        <taxon>Embryophyta</taxon>
        <taxon>Tracheophyta</taxon>
        <taxon>Spermatophyta</taxon>
        <taxon>Magnoliopsida</taxon>
        <taxon>eudicotyledons</taxon>
        <taxon>Gunneridae</taxon>
        <taxon>Pentapetalae</taxon>
        <taxon>rosids</taxon>
        <taxon>malvids</taxon>
        <taxon>Brassicales</taxon>
        <taxon>Brassicaceae</taxon>
        <taxon>Camelineae</taxon>
        <taxon>Arabidopsis</taxon>
    </lineage>
</organism>
<evidence type="ECO:0000255" key="1">
    <source>
        <dbReference type="PROSITE-ProRule" id="PRU00723"/>
    </source>
</evidence>
<evidence type="ECO:0000256" key="2">
    <source>
        <dbReference type="SAM" id="MobiDB-lite"/>
    </source>
</evidence>
<evidence type="ECO:0000305" key="3"/>
<proteinExistence type="predicted"/>
<sequence>MANVSFTFDSQEQNKELRPSRLVGRSDERNGRRQGTEQKKKEKEDSGFRVSEEGEIPLQQGSNTDSYARDDLTQQQRVSDVVMQRRSHETESRLWQRARTQDRRGSESRMMFDGRTQWSHAPVLSSAYPVRPGEDNCLFYMKNHLCEWGSECCYNHPPLQEIPCRIGKKLDCKAGACKRGSNCPFNHPKERDGDSLPMPQGRTPDLRRNDSGRRYNTESRSWPENKEKEVGQFRDHQDSKEDAQEVLLQQRPRDVEMRKRSRSPDFRAKTETKEHREAEERSSRESATATGKVSGKENELRPTYVYLLMMPENHNVDVQQTLQEQRKRNIKKARIEARLKLDQIRPTVVLENSRATKMMIEWGFTDFRKLQGSNLGNKKWICWVRKHCC</sequence>
<feature type="chain" id="PRO_0000371969" description="Putative zinc finger CCCH domain-containing protein 10">
    <location>
        <begin position="1"/>
        <end position="389"/>
    </location>
</feature>
<feature type="zinc finger region" description="C3H1-type 1" evidence="1">
    <location>
        <begin position="131"/>
        <end position="157"/>
    </location>
</feature>
<feature type="zinc finger region" description="C3H1-type 2" evidence="1">
    <location>
        <begin position="158"/>
        <end position="190"/>
    </location>
</feature>
<feature type="region of interest" description="Disordered" evidence="2">
    <location>
        <begin position="1"/>
        <end position="110"/>
    </location>
</feature>
<feature type="region of interest" description="Disordered" evidence="2">
    <location>
        <begin position="183"/>
        <end position="296"/>
    </location>
</feature>
<feature type="compositionally biased region" description="Polar residues" evidence="2">
    <location>
        <begin position="1"/>
        <end position="11"/>
    </location>
</feature>
<feature type="compositionally biased region" description="Basic and acidic residues" evidence="2">
    <location>
        <begin position="12"/>
        <end position="52"/>
    </location>
</feature>
<feature type="compositionally biased region" description="Basic and acidic residues" evidence="2">
    <location>
        <begin position="86"/>
        <end position="110"/>
    </location>
</feature>
<feature type="compositionally biased region" description="Basic and acidic residues" evidence="2">
    <location>
        <begin position="204"/>
        <end position="243"/>
    </location>
</feature>
<feature type="compositionally biased region" description="Basic and acidic residues" evidence="2">
    <location>
        <begin position="251"/>
        <end position="284"/>
    </location>
</feature>
<name>C3H10_ARATH</name>
<comment type="sequence caution" evidence="3">
    <conflict type="erroneous gene model prediction">
        <sequence resource="EMBL-CDS" id="AAG51745"/>
    </conflict>
    <text>Was originally thought to correspond to two different genes At1g29600 and At1g29610.</text>
</comment>
<comment type="sequence caution" evidence="3">
    <conflict type="erroneous gene model prediction">
        <sequence resource="EMBL-CDS" id="AAG51747"/>
    </conflict>
    <text>Was originally thought to correspond to two different genes At1g29600 and At1g29610.</text>
</comment>